<reference key="1">
    <citation type="submission" date="2008-10" db="EMBL/GenBank/DDBJ databases">
        <title>Genome sequence of Bacillus cereus G9842.</title>
        <authorList>
            <person name="Dodson R.J."/>
            <person name="Durkin A.S."/>
            <person name="Rosovitz M.J."/>
            <person name="Rasko D.A."/>
            <person name="Hoffmaster A."/>
            <person name="Ravel J."/>
            <person name="Sutton G."/>
        </authorList>
    </citation>
    <scope>NUCLEOTIDE SEQUENCE [LARGE SCALE GENOMIC DNA]</scope>
    <source>
        <strain>G9842</strain>
    </source>
</reference>
<gene>
    <name type="ordered locus">BCG9842_B4408</name>
</gene>
<proteinExistence type="inferred from homology"/>
<dbReference type="EC" id="3.2.2.-" evidence="1"/>
<dbReference type="EMBL" id="CP001186">
    <property type="protein sequence ID" value="ACK96654.1"/>
    <property type="molecule type" value="Genomic_DNA"/>
</dbReference>
<dbReference type="RefSeq" id="WP_001148793.1">
    <property type="nucleotide sequence ID" value="NC_011772.1"/>
</dbReference>
<dbReference type="SMR" id="B7IJ32"/>
<dbReference type="KEGG" id="bcg:BCG9842_B4408"/>
<dbReference type="HOGENOM" id="CLU_060471_0_2_9"/>
<dbReference type="Proteomes" id="UP000006744">
    <property type="component" value="Chromosome"/>
</dbReference>
<dbReference type="GO" id="GO:0003905">
    <property type="term" value="F:alkylbase DNA N-glycosylase activity"/>
    <property type="evidence" value="ECO:0007669"/>
    <property type="project" value="InterPro"/>
</dbReference>
<dbReference type="GO" id="GO:0003677">
    <property type="term" value="F:DNA binding"/>
    <property type="evidence" value="ECO:0007669"/>
    <property type="project" value="InterPro"/>
</dbReference>
<dbReference type="GO" id="GO:0006284">
    <property type="term" value="P:base-excision repair"/>
    <property type="evidence" value="ECO:0007669"/>
    <property type="project" value="InterPro"/>
</dbReference>
<dbReference type="CDD" id="cd00540">
    <property type="entry name" value="AAG"/>
    <property type="match status" value="1"/>
</dbReference>
<dbReference type="FunFam" id="3.10.300.10:FF:000001">
    <property type="entry name" value="Putative 3-methyladenine DNA glycosylase"/>
    <property type="match status" value="1"/>
</dbReference>
<dbReference type="Gene3D" id="3.10.300.10">
    <property type="entry name" value="Methylpurine-DNA glycosylase (MPG)"/>
    <property type="match status" value="1"/>
</dbReference>
<dbReference type="HAMAP" id="MF_00527">
    <property type="entry name" value="3MGH"/>
    <property type="match status" value="1"/>
</dbReference>
<dbReference type="InterPro" id="IPR011034">
    <property type="entry name" value="Formyl_transferase-like_C_sf"/>
</dbReference>
<dbReference type="InterPro" id="IPR003180">
    <property type="entry name" value="MPG"/>
</dbReference>
<dbReference type="InterPro" id="IPR036995">
    <property type="entry name" value="MPG_sf"/>
</dbReference>
<dbReference type="NCBIfam" id="TIGR00567">
    <property type="entry name" value="3mg"/>
    <property type="match status" value="1"/>
</dbReference>
<dbReference type="NCBIfam" id="NF002001">
    <property type="entry name" value="PRK00802.1-1"/>
    <property type="match status" value="1"/>
</dbReference>
<dbReference type="NCBIfam" id="NF002003">
    <property type="entry name" value="PRK00802.1-3"/>
    <property type="match status" value="1"/>
</dbReference>
<dbReference type="PANTHER" id="PTHR10429">
    <property type="entry name" value="DNA-3-METHYLADENINE GLYCOSYLASE"/>
    <property type="match status" value="1"/>
</dbReference>
<dbReference type="PANTHER" id="PTHR10429:SF0">
    <property type="entry name" value="DNA-3-METHYLADENINE GLYCOSYLASE"/>
    <property type="match status" value="1"/>
</dbReference>
<dbReference type="Pfam" id="PF02245">
    <property type="entry name" value="Pur_DNA_glyco"/>
    <property type="match status" value="1"/>
</dbReference>
<dbReference type="SUPFAM" id="SSF50486">
    <property type="entry name" value="FMT C-terminal domain-like"/>
    <property type="match status" value="1"/>
</dbReference>
<organism>
    <name type="scientific">Bacillus cereus (strain G9842)</name>
    <dbReference type="NCBI Taxonomy" id="405531"/>
    <lineage>
        <taxon>Bacteria</taxon>
        <taxon>Bacillati</taxon>
        <taxon>Bacillota</taxon>
        <taxon>Bacilli</taxon>
        <taxon>Bacillales</taxon>
        <taxon>Bacillaceae</taxon>
        <taxon>Bacillus</taxon>
        <taxon>Bacillus cereus group</taxon>
    </lineage>
</organism>
<accession>B7IJ32</accession>
<name>3MGH_BACC2</name>
<keyword id="KW-0227">DNA damage</keyword>
<keyword id="KW-0234">DNA repair</keyword>
<keyword id="KW-0378">Hydrolase</keyword>
<evidence type="ECO:0000255" key="1">
    <source>
        <dbReference type="HAMAP-Rule" id="MF_00527"/>
    </source>
</evidence>
<feature type="chain" id="PRO_1000127746" description="Putative 3-methyladenine DNA glycosylase">
    <location>
        <begin position="1"/>
        <end position="205"/>
    </location>
</feature>
<protein>
    <recommendedName>
        <fullName evidence="1">Putative 3-methyladenine DNA glycosylase</fullName>
        <ecNumber evidence="1">3.2.2.-</ecNumber>
    </recommendedName>
</protein>
<comment type="similarity">
    <text evidence="1">Belongs to the DNA glycosylase MPG family.</text>
</comment>
<sequence>MQAPPSFYEGDTLEVAKKLLGQKLVHIVDGIKRSGIIVEVEAYKGPDDKAAHSYGGRRTDRTEVMFGAPGHAYVYLIYGMYHCFNVITAPVGTPQGVLIRALEPVDGIEEIKLARYNKTDITKAQYKNLTSGPGKLCRALGITLKERGLSLQSDTLHIELVPKDEHISSQYKIAAGPRINIDYAEEAVHYPWRFYYKGHPFVSKK</sequence>